<comment type="function">
    <text evidence="1">NAD-binding protein involved in the addition of a carboxymethylaminomethyl (cmnm) group at the wobble position (U34) of certain tRNAs, forming tRNA-cmnm(5)s(2)U34.</text>
</comment>
<comment type="cofactor">
    <cofactor evidence="1">
        <name>FAD</name>
        <dbReference type="ChEBI" id="CHEBI:57692"/>
    </cofactor>
</comment>
<comment type="subunit">
    <text evidence="1">Homodimer. Heterotetramer of two MnmE and two MnmG subunits.</text>
</comment>
<comment type="subcellular location">
    <subcellularLocation>
        <location evidence="1">Cytoplasm</location>
    </subcellularLocation>
</comment>
<comment type="similarity">
    <text evidence="1">Belongs to the MnmG family.</text>
</comment>
<evidence type="ECO:0000255" key="1">
    <source>
        <dbReference type="HAMAP-Rule" id="MF_00129"/>
    </source>
</evidence>
<feature type="chain" id="PRO_0000117211" description="tRNA uridine 5-carboxymethylaminomethyl modification enzyme MnmG">
    <location>
        <begin position="1"/>
        <end position="632"/>
    </location>
</feature>
<feature type="binding site" evidence="1">
    <location>
        <begin position="13"/>
        <end position="18"/>
    </location>
    <ligand>
        <name>FAD</name>
        <dbReference type="ChEBI" id="CHEBI:57692"/>
    </ligand>
</feature>
<feature type="binding site" evidence="1">
    <location>
        <position position="125"/>
    </location>
    <ligand>
        <name>FAD</name>
        <dbReference type="ChEBI" id="CHEBI:57692"/>
    </ligand>
</feature>
<feature type="binding site" evidence="1">
    <location>
        <position position="180"/>
    </location>
    <ligand>
        <name>FAD</name>
        <dbReference type="ChEBI" id="CHEBI:57692"/>
    </ligand>
</feature>
<feature type="binding site" evidence="1">
    <location>
        <begin position="273"/>
        <end position="287"/>
    </location>
    <ligand>
        <name>NAD(+)</name>
        <dbReference type="ChEBI" id="CHEBI:57540"/>
    </ligand>
</feature>
<feature type="binding site" evidence="1">
    <location>
        <position position="370"/>
    </location>
    <ligand>
        <name>FAD</name>
        <dbReference type="ChEBI" id="CHEBI:57692"/>
    </ligand>
</feature>
<protein>
    <recommendedName>
        <fullName evidence="1">tRNA uridine 5-carboxymethylaminomethyl modification enzyme MnmG</fullName>
    </recommendedName>
    <alternativeName>
        <fullName evidence="1">Glucose-inhibited division protein A</fullName>
    </alternativeName>
</protein>
<sequence>MLYHETFDVIVVGGGHAGTEAALASARTGQKTLLLTHNIDTLGQMSCNPAIGGIGKGHLVKEVDAMGGLMAQAIDHAGIQFRTLNASKGPAVRATRAQADRALYKAYVRDFLENAPNLTLFQQAVDDLIVEQDQVRGVITQMGLKFHAKAVVLTVGTFLGGKIHIGLQSSSGGRAGDPPSIALADRLRELPFRVDRLKTGTPPRIDARSVDFSVLEAQHGDNPTPVFSFMGDRTHHPRQIPCFITHTNEQTHEVIRNNLDRSPMYAGIIEGIGPRYCPSIEDKVMRFADKNSHQIFIEPEGLTTHELYPNGISTSLPFDVQVQIVRSMKGFENAHIVRPGYAIEYDFFDPRDLKQTYETKFIQGLFFAGQINGTTGYEEAAAQGLMAGLNASLFSQEKEGWSPRRDQAYMGVLIDDLSTMGTKEPYRMFTSRAEHRLLLREDNADLRLTEKARELGLVDDARWARFNQKIDNMEQERQRLKSTWMNPASTGIEELNQLLKSPMNREASGEDLLRRPEMTYEQLTSLAAFAPALDDLEAAEQVEIQVKYEGYIKRQQDEIEKSLRHEHTKLPADLDYSDVKGLSNEVVLKLNTAKPETLGIASRISGITPAAISILLVHLKKIGMLKVGEENA</sequence>
<gene>
    <name evidence="1" type="primary">mnmG</name>
    <name evidence="1" type="synonym">gidA</name>
    <name type="ordered locus">VV1_1010</name>
</gene>
<reference key="1">
    <citation type="submission" date="2002-12" db="EMBL/GenBank/DDBJ databases">
        <title>Complete genome sequence of Vibrio vulnificus CMCP6.</title>
        <authorList>
            <person name="Rhee J.H."/>
            <person name="Kim S.Y."/>
            <person name="Chung S.S."/>
            <person name="Kim J.J."/>
            <person name="Moon Y.H."/>
            <person name="Jeong H."/>
            <person name="Choy H.E."/>
        </authorList>
    </citation>
    <scope>NUCLEOTIDE SEQUENCE [LARGE SCALE GENOMIC DNA]</scope>
    <source>
        <strain>CMCP6</strain>
    </source>
</reference>
<proteinExistence type="inferred from homology"/>
<keyword id="KW-0963">Cytoplasm</keyword>
<keyword id="KW-0274">FAD</keyword>
<keyword id="KW-0285">Flavoprotein</keyword>
<keyword id="KW-0520">NAD</keyword>
<keyword id="KW-0819">tRNA processing</keyword>
<dbReference type="EMBL" id="AE016795">
    <property type="protein sequence ID" value="AAO09498.1"/>
    <property type="molecule type" value="Genomic_DNA"/>
</dbReference>
<dbReference type="RefSeq" id="WP_011079044.1">
    <property type="nucleotide sequence ID" value="NC_004459.3"/>
</dbReference>
<dbReference type="SMR" id="Q8DDH9"/>
<dbReference type="KEGG" id="vvu:VV1_1010"/>
<dbReference type="HOGENOM" id="CLU_007831_2_2_6"/>
<dbReference type="Proteomes" id="UP000002275">
    <property type="component" value="Chromosome 1"/>
</dbReference>
<dbReference type="GO" id="GO:0005829">
    <property type="term" value="C:cytosol"/>
    <property type="evidence" value="ECO:0007669"/>
    <property type="project" value="TreeGrafter"/>
</dbReference>
<dbReference type="GO" id="GO:0050660">
    <property type="term" value="F:flavin adenine dinucleotide binding"/>
    <property type="evidence" value="ECO:0007669"/>
    <property type="project" value="UniProtKB-UniRule"/>
</dbReference>
<dbReference type="GO" id="GO:0030488">
    <property type="term" value="P:tRNA methylation"/>
    <property type="evidence" value="ECO:0007669"/>
    <property type="project" value="TreeGrafter"/>
</dbReference>
<dbReference type="GO" id="GO:0002098">
    <property type="term" value="P:tRNA wobble uridine modification"/>
    <property type="evidence" value="ECO:0007669"/>
    <property type="project" value="InterPro"/>
</dbReference>
<dbReference type="FunFam" id="1.10.10.1800:FF:000001">
    <property type="entry name" value="tRNA uridine 5-carboxymethylaminomethyl modification enzyme MnmG"/>
    <property type="match status" value="1"/>
</dbReference>
<dbReference type="FunFam" id="1.10.150.570:FF:000001">
    <property type="entry name" value="tRNA uridine 5-carboxymethylaminomethyl modification enzyme MnmG"/>
    <property type="match status" value="1"/>
</dbReference>
<dbReference type="FunFam" id="3.50.50.60:FF:000002">
    <property type="entry name" value="tRNA uridine 5-carboxymethylaminomethyl modification enzyme MnmG"/>
    <property type="match status" value="1"/>
</dbReference>
<dbReference type="FunFam" id="3.50.50.60:FF:000010">
    <property type="entry name" value="tRNA uridine 5-carboxymethylaminomethyl modification enzyme MnmG"/>
    <property type="match status" value="1"/>
</dbReference>
<dbReference type="Gene3D" id="3.50.50.60">
    <property type="entry name" value="FAD/NAD(P)-binding domain"/>
    <property type="match status" value="2"/>
</dbReference>
<dbReference type="Gene3D" id="1.10.150.570">
    <property type="entry name" value="GidA associated domain, C-terminal subdomain"/>
    <property type="match status" value="1"/>
</dbReference>
<dbReference type="Gene3D" id="1.10.10.1800">
    <property type="entry name" value="tRNA uridine 5-carboxymethylaminomethyl modification enzyme MnmG/GidA"/>
    <property type="match status" value="1"/>
</dbReference>
<dbReference type="HAMAP" id="MF_00129">
    <property type="entry name" value="MnmG_GidA"/>
    <property type="match status" value="1"/>
</dbReference>
<dbReference type="InterPro" id="IPR036188">
    <property type="entry name" value="FAD/NAD-bd_sf"/>
</dbReference>
<dbReference type="InterPro" id="IPR049312">
    <property type="entry name" value="GIDA_C_N"/>
</dbReference>
<dbReference type="InterPro" id="IPR004416">
    <property type="entry name" value="MnmG"/>
</dbReference>
<dbReference type="InterPro" id="IPR002218">
    <property type="entry name" value="MnmG-rel"/>
</dbReference>
<dbReference type="InterPro" id="IPR020595">
    <property type="entry name" value="MnmG-rel_CS"/>
</dbReference>
<dbReference type="InterPro" id="IPR026904">
    <property type="entry name" value="MnmG_C"/>
</dbReference>
<dbReference type="InterPro" id="IPR047001">
    <property type="entry name" value="MnmG_C_subdom"/>
</dbReference>
<dbReference type="InterPro" id="IPR044920">
    <property type="entry name" value="MnmG_C_subdom_sf"/>
</dbReference>
<dbReference type="InterPro" id="IPR040131">
    <property type="entry name" value="MnmG_N"/>
</dbReference>
<dbReference type="NCBIfam" id="TIGR00136">
    <property type="entry name" value="mnmG_gidA"/>
    <property type="match status" value="1"/>
</dbReference>
<dbReference type="PANTHER" id="PTHR11806">
    <property type="entry name" value="GLUCOSE INHIBITED DIVISION PROTEIN A"/>
    <property type="match status" value="1"/>
</dbReference>
<dbReference type="PANTHER" id="PTHR11806:SF0">
    <property type="entry name" value="PROTEIN MTO1 HOMOLOG, MITOCHONDRIAL"/>
    <property type="match status" value="1"/>
</dbReference>
<dbReference type="Pfam" id="PF01134">
    <property type="entry name" value="GIDA"/>
    <property type="match status" value="1"/>
</dbReference>
<dbReference type="Pfam" id="PF21680">
    <property type="entry name" value="GIDA_C_1st"/>
    <property type="match status" value="1"/>
</dbReference>
<dbReference type="Pfam" id="PF13932">
    <property type="entry name" value="SAM_GIDA_C"/>
    <property type="match status" value="1"/>
</dbReference>
<dbReference type="SMART" id="SM01228">
    <property type="entry name" value="GIDA_assoc_3"/>
    <property type="match status" value="1"/>
</dbReference>
<dbReference type="SUPFAM" id="SSF51905">
    <property type="entry name" value="FAD/NAD(P)-binding domain"/>
    <property type="match status" value="1"/>
</dbReference>
<dbReference type="PROSITE" id="PS01280">
    <property type="entry name" value="GIDA_1"/>
    <property type="match status" value="1"/>
</dbReference>
<dbReference type="PROSITE" id="PS01281">
    <property type="entry name" value="GIDA_2"/>
    <property type="match status" value="1"/>
</dbReference>
<organism>
    <name type="scientific">Vibrio vulnificus (strain CMCP6)</name>
    <dbReference type="NCBI Taxonomy" id="216895"/>
    <lineage>
        <taxon>Bacteria</taxon>
        <taxon>Pseudomonadati</taxon>
        <taxon>Pseudomonadota</taxon>
        <taxon>Gammaproteobacteria</taxon>
        <taxon>Vibrionales</taxon>
        <taxon>Vibrionaceae</taxon>
        <taxon>Vibrio</taxon>
    </lineage>
</organism>
<name>MNMG_VIBVU</name>
<accession>Q8DDH9</accession>